<keyword id="KW-0020">Allergen</keyword>
<keyword id="KW-0119">Carbohydrate metabolism</keyword>
<keyword id="KW-0165">Cleavage on pair of basic residues</keyword>
<keyword id="KW-1015">Disulfide bond</keyword>
<keyword id="KW-0325">Glycoprotein</keyword>
<keyword id="KW-0326">Glycosidase</keyword>
<keyword id="KW-0378">Hydrolase</keyword>
<keyword id="KW-0624">Polysaccharide degradation</keyword>
<keyword id="KW-1185">Reference proteome</keyword>
<keyword id="KW-0964">Secreted</keyword>
<keyword id="KW-0732">Signal</keyword>
<reference key="1">
    <citation type="journal article" date="2011" name="Genome Biol.">
        <title>Comparative and functional genomics provide insights into the pathogenicity of dermatophytic fungi.</title>
        <authorList>
            <person name="Burmester A."/>
            <person name="Shelest E."/>
            <person name="Gloeckner G."/>
            <person name="Heddergott C."/>
            <person name="Schindler S."/>
            <person name="Staib P."/>
            <person name="Heidel A."/>
            <person name="Felder M."/>
            <person name="Petzold A."/>
            <person name="Szafranski K."/>
            <person name="Feuermann M."/>
            <person name="Pedruzzi I."/>
            <person name="Priebe S."/>
            <person name="Groth M."/>
            <person name="Winkler R."/>
            <person name="Li W."/>
            <person name="Kniemeyer O."/>
            <person name="Schroeckh V."/>
            <person name="Hertweck C."/>
            <person name="Hube B."/>
            <person name="White T.C."/>
            <person name="Platzer M."/>
            <person name="Guthke R."/>
            <person name="Heitman J."/>
            <person name="Woestemeyer J."/>
            <person name="Zipfel P.F."/>
            <person name="Monod M."/>
            <person name="Brakhage A.A."/>
        </authorList>
    </citation>
    <scope>NUCLEOTIDE SEQUENCE [LARGE SCALE GENOMIC DNA]</scope>
    <scope>IDENTIFICATION BY MASS SPECTROMETRY</scope>
    <scope>SUBCELLULAR LOCATION</scope>
    <scope>INDUCTION</scope>
    <source>
        <strain evidence="9">ATCC MYA-4681 / CBS 112371</strain>
    </source>
</reference>
<reference key="2">
    <citation type="journal article" date="2011" name="Proteomics">
        <title>Identification of novel secreted proteases during extracellular proteolysis by dermatophytes at acidic pH.</title>
        <authorList>
            <person name="Sriranganadane D."/>
            <person name="Waridel P."/>
            <person name="Salamin K."/>
            <person name="Feuermann M."/>
            <person name="Mignon B."/>
            <person name="Staib P."/>
            <person name="Neuhaus J.M."/>
            <person name="Quadroni M."/>
            <person name="Monod M."/>
        </authorList>
    </citation>
    <scope>IDENTIFICATION BY MASS SPECTROMETRY</scope>
    <scope>SUBCELLULAR LOCATION</scope>
</reference>
<feature type="signal peptide" evidence="2">
    <location>
        <begin position="1"/>
        <end position="18"/>
    </location>
</feature>
<feature type="propeptide" id="PRO_0000434421" evidence="1">
    <location>
        <begin position="19"/>
        <end position="24"/>
    </location>
</feature>
<feature type="chain" id="PRO_0000434422" description="Glucoamylase ARB_02327-1" evidence="2">
    <location>
        <begin position="25"/>
        <end position="610"/>
    </location>
</feature>
<feature type="domain" description="CBM20" evidence="4">
    <location>
        <begin position="504"/>
        <end position="610"/>
    </location>
</feature>
<feature type="active site" description="Proton acceptor" evidence="1 5">
    <location>
        <position position="199"/>
    </location>
</feature>
<feature type="active site" description="Proton donor" evidence="1 5">
    <location>
        <position position="202"/>
    </location>
</feature>
<feature type="binding site" evidence="1">
    <location>
        <position position="143"/>
    </location>
    <ligand>
        <name>substrate</name>
    </ligand>
</feature>
<feature type="glycosylation site" description="N-linked (GlcNAc...) asparagine" evidence="3">
    <location>
        <position position="49"/>
    </location>
</feature>
<feature type="glycosylation site" description="N-linked (GlcNAc...) asparagine" evidence="3">
    <location>
        <position position="194"/>
    </location>
</feature>
<feature type="disulfide bond" evidence="1">
    <location>
        <begin position="233"/>
        <end position="236"/>
    </location>
</feature>
<feature type="disulfide bond" evidence="1">
    <location>
        <begin position="245"/>
        <end position="472"/>
    </location>
</feature>
<feature type="disulfide bond" evidence="1">
    <location>
        <begin position="285"/>
        <end position="293"/>
    </location>
</feature>
<organism>
    <name type="scientific">Arthroderma benhamiae (strain ATCC MYA-4681 / CBS 112371)</name>
    <name type="common">Trichophyton mentagrophytes</name>
    <dbReference type="NCBI Taxonomy" id="663331"/>
    <lineage>
        <taxon>Eukaryota</taxon>
        <taxon>Fungi</taxon>
        <taxon>Dikarya</taxon>
        <taxon>Ascomycota</taxon>
        <taxon>Pezizomycotina</taxon>
        <taxon>Eurotiomycetes</taxon>
        <taxon>Eurotiomycetidae</taxon>
        <taxon>Onygenales</taxon>
        <taxon>Arthrodermataceae</taxon>
        <taxon>Trichophyton</taxon>
    </lineage>
</organism>
<gene>
    <name type="ORF">ARB_02327-1</name>
</gene>
<name>AMYG_ARTBC</name>
<accession>P0DN29</accession>
<accession>D4B1J8</accession>
<evidence type="ECO:0000250" key="1">
    <source>
        <dbReference type="UniProtKB" id="P69327"/>
    </source>
</evidence>
<evidence type="ECO:0000255" key="2"/>
<evidence type="ECO:0000255" key="3">
    <source>
        <dbReference type="PROSITE-ProRule" id="PRU00498"/>
    </source>
</evidence>
<evidence type="ECO:0000255" key="4">
    <source>
        <dbReference type="PROSITE-ProRule" id="PRU00594"/>
    </source>
</evidence>
<evidence type="ECO:0000255" key="5">
    <source>
        <dbReference type="PROSITE-ProRule" id="PRU10051"/>
    </source>
</evidence>
<evidence type="ECO:0000269" key="6">
    <source>
    </source>
</evidence>
<evidence type="ECO:0000269" key="7">
    <source>
    </source>
</evidence>
<evidence type="ECO:0000305" key="8"/>
<evidence type="ECO:0000312" key="9">
    <source>
        <dbReference type="Proteomes" id="UP000008866"/>
    </source>
</evidence>
<comment type="catalytic activity">
    <reaction evidence="1">
        <text>Hydrolysis of terminal (1-&gt;4)-linked alpha-D-glucose residues successively from non-reducing ends of the chains with release of beta-D-glucose.</text>
        <dbReference type="EC" id="3.2.1.3"/>
    </reaction>
</comment>
<comment type="subcellular location">
    <subcellularLocation>
        <location evidence="6 7">Secreted</location>
    </subcellularLocation>
</comment>
<comment type="induction">
    <text evidence="6">Expression is up-regulated in presence of human keratinocytes.</text>
</comment>
<comment type="allergen">
    <text evidence="8">May cause an allergic reaction in human.</text>
</comment>
<comment type="similarity">
    <text evidence="8">Belongs to the glycosyl hydrolase 15 family.</text>
</comment>
<comment type="sequence caution" evidence="8">
    <conflict type="erroneous gene model prediction">
        <sequence resource="EMBL-CDS" id="EFE30837"/>
    </conflict>
    <text>The predicted gene has been split into 2 genes: ARB_02327-1 and ARB_02327-2.</text>
</comment>
<proteinExistence type="evidence at protein level"/>
<protein>
    <recommendedName>
        <fullName evidence="8">Glucoamylase ARB_02327-1</fullName>
        <ecNumber evidence="1">3.2.1.3</ecNumber>
    </recommendedName>
    <alternativeName>
        <fullName evidence="1">1,4-alpha-D-glucan glucohydrolase</fullName>
    </alternativeName>
    <alternativeName>
        <fullName evidence="8">Allergen sch c 1 homolog</fullName>
    </alternativeName>
    <alternativeName>
        <fullName evidence="1">Glucan 1,4-alpha-glucosidase</fullName>
    </alternativeName>
</protein>
<sequence length="610" mass="67485">MRVTSLLWSSLVIPAAVGFQVRFKPSEDTALDTVDDGTLQSLLDNIGLNGSNAWDTRPGLVIASPSKKDPNYFFTWTRDSALVLKCITDAFAAGNTALQETIHEYISSQARIQLLNTRSGGLSSGGLGEPKYRVDETPYNEDWGRPQADGPALRATALIAYARWLLENDYYDVAKSIVWPVVKNDLSYVSEHWNTTAFDLWEEVNSPSFFTTIVQHRALVEGINIARALDETCPHCESQAPQALCYLQSYWTGTAVRSNYGQGRSGLDVASILGSIHTFDPEGECDDTTFQPCSARALANHKAVTDSFRSIYKINGGIKQGEAVAVGRYPEDVYFNGNPWYLATYAAAEQLYDAMYQWNKIGKITVTDVSMPFFKDIYPEVQTGTHESSSPEFGNIIAAVKAYAEGYIEVAKKYTPCTGMLSEQFSRDNGTPLSVADLTWSYASYLTVMARRNSVVPASWGEKNARDIPSTCVPSSATGPYQTATITHWPPNLTPTAQPSPCPTALPTKNNVRFRLLATTQVGEDVFLVGSIPELGSWDVKKAVPLNADIYADNCHQWYVDIELPTAVAFEYKFIRKRGGEVVWEQDPNRKYTVPQTCGVSGAIKRDTWR</sequence>
<dbReference type="EC" id="3.2.1.3" evidence="1"/>
<dbReference type="EMBL" id="ABSU01000026">
    <property type="protein sequence ID" value="EFE30837.1"/>
    <property type="status" value="ALT_SEQ"/>
    <property type="molecule type" value="Genomic_DNA"/>
</dbReference>
<dbReference type="SMR" id="P0DN29"/>
<dbReference type="STRING" id="663331.P0DN29"/>
<dbReference type="eggNOG" id="KOG1198">
    <property type="taxonomic scope" value="Eukaryota"/>
</dbReference>
<dbReference type="OrthoDB" id="6123450at2759"/>
<dbReference type="Proteomes" id="UP000008866">
    <property type="component" value="Unassembled WGS sequence"/>
</dbReference>
<dbReference type="GO" id="GO:0005576">
    <property type="term" value="C:extracellular region"/>
    <property type="evidence" value="ECO:0007669"/>
    <property type="project" value="UniProtKB-SubCell"/>
</dbReference>
<dbReference type="GO" id="GO:0000324">
    <property type="term" value="C:fungal-type vacuole"/>
    <property type="evidence" value="ECO:0007669"/>
    <property type="project" value="TreeGrafter"/>
</dbReference>
<dbReference type="GO" id="GO:0004339">
    <property type="term" value="F:glucan 1,4-alpha-glucosidase activity"/>
    <property type="evidence" value="ECO:0007669"/>
    <property type="project" value="UniProtKB-EC"/>
</dbReference>
<dbReference type="GO" id="GO:2001070">
    <property type="term" value="F:starch binding"/>
    <property type="evidence" value="ECO:0007669"/>
    <property type="project" value="InterPro"/>
</dbReference>
<dbReference type="GO" id="GO:0000272">
    <property type="term" value="P:polysaccharide catabolic process"/>
    <property type="evidence" value="ECO:0007669"/>
    <property type="project" value="UniProtKB-KW"/>
</dbReference>
<dbReference type="CDD" id="cd05811">
    <property type="entry name" value="CBM20_glucoamylase"/>
    <property type="match status" value="1"/>
</dbReference>
<dbReference type="FunFam" id="1.50.10.10:FF:000018">
    <property type="entry name" value="Glucoamylase"/>
    <property type="match status" value="1"/>
</dbReference>
<dbReference type="FunFam" id="2.60.40.10:FF:000552">
    <property type="entry name" value="Related to glucoamylase"/>
    <property type="match status" value="1"/>
</dbReference>
<dbReference type="Gene3D" id="1.50.10.10">
    <property type="match status" value="1"/>
</dbReference>
<dbReference type="Gene3D" id="2.60.40.10">
    <property type="entry name" value="Immunoglobulins"/>
    <property type="match status" value="1"/>
</dbReference>
<dbReference type="InterPro" id="IPR008928">
    <property type="entry name" value="6-hairpin_glycosidase_sf"/>
</dbReference>
<dbReference type="InterPro" id="IPR012341">
    <property type="entry name" value="6hp_glycosidase-like_sf"/>
</dbReference>
<dbReference type="InterPro" id="IPR013784">
    <property type="entry name" value="Carb-bd-like_fold"/>
</dbReference>
<dbReference type="InterPro" id="IPR002044">
    <property type="entry name" value="CBM20"/>
</dbReference>
<dbReference type="InterPro" id="IPR034836">
    <property type="entry name" value="CBM20_glucoamylase"/>
</dbReference>
<dbReference type="InterPro" id="IPR011613">
    <property type="entry name" value="GH15-like"/>
</dbReference>
<dbReference type="InterPro" id="IPR000165">
    <property type="entry name" value="Glucoamylase"/>
</dbReference>
<dbReference type="InterPro" id="IPR008291">
    <property type="entry name" value="Glucoamylase_SBD"/>
</dbReference>
<dbReference type="InterPro" id="IPR013783">
    <property type="entry name" value="Ig-like_fold"/>
</dbReference>
<dbReference type="PANTHER" id="PTHR31616:SF12">
    <property type="entry name" value="GLUCOAMYLASE"/>
    <property type="match status" value="1"/>
</dbReference>
<dbReference type="PANTHER" id="PTHR31616">
    <property type="entry name" value="TREHALASE"/>
    <property type="match status" value="1"/>
</dbReference>
<dbReference type="Pfam" id="PF00686">
    <property type="entry name" value="CBM_20"/>
    <property type="match status" value="1"/>
</dbReference>
<dbReference type="Pfam" id="PF00723">
    <property type="entry name" value="Glyco_hydro_15"/>
    <property type="match status" value="1"/>
</dbReference>
<dbReference type="PIRSF" id="PIRSF001031">
    <property type="entry name" value="Glu-a-glcsd_SBD"/>
    <property type="match status" value="1"/>
</dbReference>
<dbReference type="PRINTS" id="PR00736">
    <property type="entry name" value="GLHYDRLASE15"/>
</dbReference>
<dbReference type="SMART" id="SM01065">
    <property type="entry name" value="CBM_2"/>
    <property type="match status" value="1"/>
</dbReference>
<dbReference type="SUPFAM" id="SSF48208">
    <property type="entry name" value="Six-hairpin glycosidases"/>
    <property type="match status" value="1"/>
</dbReference>
<dbReference type="SUPFAM" id="SSF49452">
    <property type="entry name" value="Starch-binding domain-like"/>
    <property type="match status" value="1"/>
</dbReference>
<dbReference type="PROSITE" id="PS51166">
    <property type="entry name" value="CBM20"/>
    <property type="match status" value="1"/>
</dbReference>